<feature type="chain" id="PRO_0000189599" description="L-seryl-tRNA(Sec) selenium transferase">
    <location>
        <begin position="1"/>
        <end position="463"/>
    </location>
</feature>
<feature type="modified residue" description="N6-(pyridoxal phosphate)lysine" evidence="4">
    <location>
        <position position="295"/>
    </location>
</feature>
<feature type="mutagenesis site" description="Still binds PLP." evidence="4">
    <original>K</original>
    <variation>N</variation>
    <location>
        <position position="224"/>
    </location>
</feature>
<feature type="mutagenesis site" description="Loss of activity and PLP binding." evidence="4">
    <original>K</original>
    <variation>N</variation>
    <location>
        <position position="295"/>
    </location>
</feature>
<feature type="mutagenesis site" description="Loss of PLP binding." evidence="4">
    <original>K</original>
    <variation>N</variation>
    <location>
        <position position="328"/>
    </location>
</feature>
<feature type="sequence conflict" description="In Ref. 1; AAA24624." evidence="5" ref="1">
    <original>S</original>
    <variation>F</variation>
    <location>
        <position position="7"/>
    </location>
</feature>
<feature type="helix" evidence="6">
    <location>
        <begin position="93"/>
        <end position="95"/>
    </location>
</feature>
<feature type="helix" evidence="6">
    <location>
        <begin position="102"/>
        <end position="113"/>
    </location>
</feature>
<feature type="helix" evidence="6">
    <location>
        <begin position="132"/>
        <end position="141"/>
    </location>
</feature>
<feature type="strand" evidence="6">
    <location>
        <begin position="145"/>
        <end position="152"/>
    </location>
</feature>
<feature type="helix" evidence="6">
    <location>
        <begin position="153"/>
        <end position="164"/>
    </location>
</feature>
<feature type="strand" evidence="6">
    <location>
        <begin position="168"/>
        <end position="173"/>
    </location>
</feature>
<feature type="turn" evidence="6">
    <location>
        <begin position="181"/>
        <end position="183"/>
    </location>
</feature>
<feature type="helix" evidence="6">
    <location>
        <begin position="186"/>
        <end position="192"/>
    </location>
</feature>
<feature type="strand" evidence="6">
    <location>
        <begin position="196"/>
        <end position="201"/>
    </location>
</feature>
<feature type="strand" evidence="6">
    <location>
        <begin position="203"/>
        <end position="205"/>
    </location>
</feature>
<feature type="helix" evidence="6">
    <location>
        <begin position="208"/>
        <end position="214"/>
    </location>
</feature>
<feature type="strand" evidence="6">
    <location>
        <begin position="219"/>
        <end position="225"/>
    </location>
</feature>
<feature type="strand" evidence="6">
    <location>
        <begin position="229"/>
        <end position="235"/>
    </location>
</feature>
<feature type="helix" evidence="6">
    <location>
        <begin position="241"/>
        <end position="251"/>
    </location>
</feature>
<feature type="strand" evidence="6">
    <location>
        <begin position="255"/>
        <end position="261"/>
    </location>
</feature>
<feature type="helix" evidence="6">
    <location>
        <begin position="267"/>
        <end position="270"/>
    </location>
</feature>
<feature type="helix" evidence="6">
    <location>
        <begin position="278"/>
        <end position="284"/>
    </location>
</feature>
<feature type="strand" evidence="6">
    <location>
        <begin position="287"/>
        <end position="292"/>
    </location>
</feature>
<feature type="strand" evidence="6">
    <location>
        <begin position="303"/>
        <end position="307"/>
    </location>
</feature>
<feature type="helix" evidence="6">
    <location>
        <begin position="309"/>
        <end position="316"/>
    </location>
</feature>
<feature type="helix" evidence="6">
    <location>
        <begin position="320"/>
        <end position="324"/>
    </location>
</feature>
<feature type="helix" evidence="6">
    <location>
        <begin position="328"/>
        <end position="340"/>
    </location>
</feature>
<feature type="helix" evidence="6">
    <location>
        <begin position="344"/>
        <end position="346"/>
    </location>
</feature>
<feature type="helix" evidence="6">
    <location>
        <begin position="347"/>
        <end position="350"/>
    </location>
</feature>
<feature type="helix" evidence="6">
    <location>
        <begin position="352"/>
        <end position="357"/>
    </location>
</feature>
<feature type="helix" evidence="6">
    <location>
        <begin position="361"/>
        <end position="379"/>
    </location>
</feature>
<feature type="turn" evidence="6">
    <location>
        <begin position="380"/>
        <end position="382"/>
    </location>
</feature>
<feature type="strand" evidence="6">
    <location>
        <begin position="386"/>
        <end position="392"/>
    </location>
</feature>
<feature type="strand" evidence="6">
    <location>
        <begin position="404"/>
        <end position="411"/>
    </location>
</feature>
<feature type="strand" evidence="6">
    <location>
        <begin position="413"/>
        <end position="415"/>
    </location>
</feature>
<feature type="helix" evidence="6">
    <location>
        <begin position="418"/>
        <end position="429"/>
    </location>
</feature>
<feature type="strand" evidence="6">
    <location>
        <begin position="430"/>
        <end position="433"/>
    </location>
</feature>
<feature type="strand" evidence="6">
    <location>
        <begin position="438"/>
        <end position="440"/>
    </location>
</feature>
<feature type="strand" evidence="6">
    <location>
        <begin position="443"/>
        <end position="447"/>
    </location>
</feature>
<feature type="helix" evidence="6">
    <location>
        <begin position="454"/>
        <end position="461"/>
    </location>
</feature>
<organism>
    <name type="scientific">Escherichia coli (strain K12)</name>
    <dbReference type="NCBI Taxonomy" id="83333"/>
    <lineage>
        <taxon>Bacteria</taxon>
        <taxon>Pseudomonadati</taxon>
        <taxon>Pseudomonadota</taxon>
        <taxon>Gammaproteobacteria</taxon>
        <taxon>Enterobacterales</taxon>
        <taxon>Enterobacteriaceae</taxon>
        <taxon>Escherichia</taxon>
    </lineage>
</organism>
<sequence length="463" mass="50607">MTTETRSLYSQLPAIDRLLRDSSFLSLRDTYGHTRVVELLRQMLDEAREVIRGSQTLPAWCENWAQEVDARLTKEAQSALRPVINLTGTVLHTNLGRALQAEAAVEAVAQAMRSPVTLEYDLDDAGRGHRDRALAQLLCRITGAEDACIVNNNAAAVLLMLAATASGKEVVVSRGELVEIGGAFRIPDVMRQAGCTLHEVGTTNRTHANDYRQAVNENTALLMKVHTSNYSIQGFTKAIDEAELVALGKELDVPVVTDLGSGSLVDLSQYGLPKEPMPQELIAAGVSLVSFSGDKLLGGPQAGIIVGKKEMIARLQSHPLKRALRADKMTLAALEATLRLYLHPEALSEKLPTLRLLTRSAEVIQIQAQRLQAPLAAHYGAEFAVQVMPCLSQIGSGSLPVDRLPSAALTFTPHDGRGSHLESLAARWRELPVPVIGRIYDGRLWLDLRCLEDEQRFLEMLLK</sequence>
<accession>P0A821</accession>
<accession>P23328</accession>
<accession>P58225</accession>
<accession>P78119</accession>
<accession>Q2M7Q4</accession>
<proteinExistence type="evidence at protein level"/>
<evidence type="ECO:0000269" key="1">
    <source>
    </source>
</evidence>
<evidence type="ECO:0000269" key="2">
    <source>
    </source>
</evidence>
<evidence type="ECO:0000269" key="3">
    <source>
    </source>
</evidence>
<evidence type="ECO:0000269" key="4">
    <source>
    </source>
</evidence>
<evidence type="ECO:0000305" key="5"/>
<evidence type="ECO:0007829" key="6">
    <source>
        <dbReference type="PDB" id="8UZW"/>
    </source>
</evidence>
<name>SELA_ECOLI</name>
<keyword id="KW-0002">3D-structure</keyword>
<keyword id="KW-0963">Cytoplasm</keyword>
<keyword id="KW-0648">Protein biosynthesis</keyword>
<keyword id="KW-0663">Pyridoxal phosphate</keyword>
<keyword id="KW-1185">Reference proteome</keyword>
<keyword id="KW-0711">Selenium</keyword>
<keyword id="KW-0808">Transferase</keyword>
<comment type="function">
    <text evidence="2 3">Converts seryl-tRNA(Sec) to selenocysteinyl-tRNA(Sec) required for selenoprotein biosynthesis. Requires selenophosphate as the selenium-donor molecule.</text>
</comment>
<comment type="catalytic activity">
    <reaction evidence="3">
        <text>L-seryl-tRNA(Sec) + selenophosphate + H(+) = L-selenocysteinyl-tRNA(Sec) + phosphate</text>
        <dbReference type="Rhea" id="RHEA:22728"/>
        <dbReference type="Rhea" id="RHEA-COMP:9742"/>
        <dbReference type="Rhea" id="RHEA-COMP:9743"/>
        <dbReference type="ChEBI" id="CHEBI:15378"/>
        <dbReference type="ChEBI" id="CHEBI:16144"/>
        <dbReference type="ChEBI" id="CHEBI:43474"/>
        <dbReference type="ChEBI" id="CHEBI:78533"/>
        <dbReference type="ChEBI" id="CHEBI:78573"/>
        <dbReference type="EC" id="2.9.1.1"/>
    </reaction>
</comment>
<comment type="cofactor">
    <cofactor evidence="2">
        <name>pyridoxal 5'-phosphate</name>
        <dbReference type="ChEBI" id="CHEBI:597326"/>
    </cofactor>
</comment>
<comment type="pathway">
    <text>Aminoacyl-tRNA biosynthesis; selenocysteinyl-tRNA(Sec) biosynthesis; selenocysteinyl-tRNA(Sec) from L-seryl-tRNA(Sec) (bacterial route): step 1/1.</text>
</comment>
<comment type="subunit">
    <text evidence="1">Homodecamer; pentamer of dimers. Binds only one seryl-tRNA(Sec) per dimer.</text>
</comment>
<comment type="subcellular location">
    <subcellularLocation>
        <location>Cytoplasm</location>
    </subcellularLocation>
</comment>
<comment type="similarity">
    <text evidence="5">Belongs to the SelA family.</text>
</comment>
<gene>
    <name type="primary">selA</name>
    <name type="synonym">fdhA</name>
    <name type="ordered locus">b3591</name>
    <name type="ordered locus">JW3564</name>
</gene>
<dbReference type="EC" id="2.9.1.1"/>
<dbReference type="EMBL" id="M64177">
    <property type="protein sequence ID" value="AAA24624.1"/>
    <property type="molecule type" value="Genomic_DNA"/>
</dbReference>
<dbReference type="EMBL" id="U00039">
    <property type="protein sequence ID" value="AAB18568.1"/>
    <property type="molecule type" value="Genomic_DNA"/>
</dbReference>
<dbReference type="EMBL" id="U00096">
    <property type="protein sequence ID" value="AAC76615.1"/>
    <property type="molecule type" value="Genomic_DNA"/>
</dbReference>
<dbReference type="EMBL" id="AP009048">
    <property type="protein sequence ID" value="BAE77702.1"/>
    <property type="molecule type" value="Genomic_DNA"/>
</dbReference>
<dbReference type="PIR" id="A65159">
    <property type="entry name" value="A65159"/>
</dbReference>
<dbReference type="RefSeq" id="NP_418048.1">
    <property type="nucleotide sequence ID" value="NC_000913.3"/>
</dbReference>
<dbReference type="RefSeq" id="WP_000206223.1">
    <property type="nucleotide sequence ID" value="NZ_CP014272.1"/>
</dbReference>
<dbReference type="RefSeq" id="WP_000206275.1">
    <property type="nucleotide sequence ID" value="NZ_STEB01000018.1"/>
</dbReference>
<dbReference type="PDB" id="8UZW">
    <property type="method" value="EM"/>
    <property type="resolution" value="2.69 A"/>
    <property type="chains" value="A/B/C/D/E/F/G/H/I/J=1-463"/>
</dbReference>
<dbReference type="PDBsum" id="8UZW"/>
<dbReference type="EMDB" id="EMD-42845"/>
<dbReference type="SMR" id="P0A821"/>
<dbReference type="BioGRID" id="4261876">
    <property type="interactions" value="39"/>
</dbReference>
<dbReference type="DIP" id="DIP-10847N"/>
<dbReference type="FunCoup" id="P0A821">
    <property type="interactions" value="138"/>
</dbReference>
<dbReference type="IntAct" id="P0A821">
    <property type="interactions" value="2"/>
</dbReference>
<dbReference type="STRING" id="511145.b3591"/>
<dbReference type="jPOST" id="P0A821"/>
<dbReference type="PaxDb" id="511145-b3591"/>
<dbReference type="EnsemblBacteria" id="AAC76615">
    <property type="protein sequence ID" value="AAC76615"/>
    <property type="gene ID" value="b3591"/>
</dbReference>
<dbReference type="GeneID" id="75204641"/>
<dbReference type="GeneID" id="948124"/>
<dbReference type="KEGG" id="ecj:JW3564"/>
<dbReference type="KEGG" id="eco:b3591"/>
<dbReference type="PATRIC" id="fig|1411691.4.peg.3120"/>
<dbReference type="EchoBASE" id="EB0934"/>
<dbReference type="eggNOG" id="COG1921">
    <property type="taxonomic scope" value="Bacteria"/>
</dbReference>
<dbReference type="HOGENOM" id="CLU_038142_1_0_6"/>
<dbReference type="InParanoid" id="P0A821"/>
<dbReference type="OMA" id="GATNRTH"/>
<dbReference type="OrthoDB" id="9787096at2"/>
<dbReference type="PhylomeDB" id="P0A821"/>
<dbReference type="BioCyc" id="EcoCyc:EG10941-MONOMER"/>
<dbReference type="BioCyc" id="MetaCyc:EG10941-MONOMER"/>
<dbReference type="UniPathway" id="UPA00906">
    <property type="reaction ID" value="UER00896"/>
</dbReference>
<dbReference type="PRO" id="PR:P0A821"/>
<dbReference type="Proteomes" id="UP000000625">
    <property type="component" value="Chromosome"/>
</dbReference>
<dbReference type="GO" id="GO:0005829">
    <property type="term" value="C:cytosol"/>
    <property type="evidence" value="ECO:0000314"/>
    <property type="project" value="EcoCyc"/>
</dbReference>
<dbReference type="GO" id="GO:0042802">
    <property type="term" value="F:identical protein binding"/>
    <property type="evidence" value="ECO:0000314"/>
    <property type="project" value="EcoCyc"/>
</dbReference>
<dbReference type="GO" id="GO:0004125">
    <property type="term" value="F:L-seryl-tRNA(Sec) selenium transferase activity"/>
    <property type="evidence" value="ECO:0000314"/>
    <property type="project" value="EcoCyc"/>
</dbReference>
<dbReference type="GO" id="GO:0030170">
    <property type="term" value="F:pyridoxal phosphate binding"/>
    <property type="evidence" value="ECO:0000314"/>
    <property type="project" value="EcoCyc"/>
</dbReference>
<dbReference type="GO" id="GO:0001717">
    <property type="term" value="P:conversion of seryl-tRNAsec to selenocys-tRNAsec"/>
    <property type="evidence" value="ECO:0000314"/>
    <property type="project" value="EcoCyc"/>
</dbReference>
<dbReference type="GO" id="GO:0016260">
    <property type="term" value="P:selenocysteine biosynthetic process"/>
    <property type="evidence" value="ECO:0000315"/>
    <property type="project" value="EcoCyc"/>
</dbReference>
<dbReference type="GO" id="GO:0001514">
    <property type="term" value="P:selenocysteine incorporation"/>
    <property type="evidence" value="ECO:0007669"/>
    <property type="project" value="UniProtKB-UniRule"/>
</dbReference>
<dbReference type="FunFam" id="3.40.640.10:FF:000028">
    <property type="entry name" value="L-seryl-tRNA(Sec) selenium transferase"/>
    <property type="match status" value="1"/>
</dbReference>
<dbReference type="FunFam" id="3.90.1150.180:FF:000001">
    <property type="entry name" value="L-seryl-tRNA(Sec) selenium transferase"/>
    <property type="match status" value="1"/>
</dbReference>
<dbReference type="Gene3D" id="3.90.1150.180">
    <property type="match status" value="1"/>
</dbReference>
<dbReference type="Gene3D" id="3.40.640.10">
    <property type="entry name" value="Type I PLP-dependent aspartate aminotransferase-like (Major domain)"/>
    <property type="match status" value="1"/>
</dbReference>
<dbReference type="HAMAP" id="MF_00423">
    <property type="entry name" value="SelA"/>
    <property type="match status" value="1"/>
</dbReference>
<dbReference type="InterPro" id="IPR015424">
    <property type="entry name" value="PyrdxlP-dep_Trfase"/>
</dbReference>
<dbReference type="InterPro" id="IPR015421">
    <property type="entry name" value="PyrdxlP-dep_Trfase_major"/>
</dbReference>
<dbReference type="InterPro" id="IPR018319">
    <property type="entry name" value="SelA-like"/>
</dbReference>
<dbReference type="InterPro" id="IPR004534">
    <property type="entry name" value="SelA_trans"/>
</dbReference>
<dbReference type="InterPro" id="IPR025862">
    <property type="entry name" value="SelA_trans_N_dom"/>
</dbReference>
<dbReference type="NCBIfam" id="TIGR00474">
    <property type="entry name" value="selA"/>
    <property type="match status" value="1"/>
</dbReference>
<dbReference type="PANTHER" id="PTHR32328">
    <property type="entry name" value="L-SERYL-TRNA(SEC) SELENIUM TRANSFERASE"/>
    <property type="match status" value="1"/>
</dbReference>
<dbReference type="PANTHER" id="PTHR32328:SF0">
    <property type="entry name" value="L-SERYL-TRNA(SEC) SELENIUM TRANSFERASE"/>
    <property type="match status" value="1"/>
</dbReference>
<dbReference type="Pfam" id="PF12390">
    <property type="entry name" value="Se-cys_synth_N"/>
    <property type="match status" value="1"/>
</dbReference>
<dbReference type="Pfam" id="PF03841">
    <property type="entry name" value="SelA"/>
    <property type="match status" value="1"/>
</dbReference>
<dbReference type="SUPFAM" id="SSF53383">
    <property type="entry name" value="PLP-dependent transferases"/>
    <property type="match status" value="1"/>
</dbReference>
<reference key="1">
    <citation type="journal article" date="1991" name="J. Biol. Chem.">
        <title>Selenocysteine synthase from Escherichia coli. Nucleotide sequence of the gene (selA) and purification of the protein.</title>
        <authorList>
            <person name="Forchhammer K."/>
            <person name="Leinfelder W."/>
            <person name="Boesmiller K."/>
            <person name="Veprek B."/>
            <person name="Boeck A."/>
        </authorList>
    </citation>
    <scope>NUCLEOTIDE SEQUENCE [GENOMIC DNA]</scope>
    <scope>FUNCTION</scope>
    <scope>COFACTOR</scope>
</reference>
<reference key="2">
    <citation type="journal article" date="1994" name="Nucleic Acids Res.">
        <title>Analysis of the Escherichia coli genome. V. DNA sequence of the region from 76.0 to 81.5 minutes.</title>
        <authorList>
            <person name="Sofia H.J."/>
            <person name="Burland V."/>
            <person name="Daniels D.L."/>
            <person name="Plunkett G. III"/>
            <person name="Blattner F.R."/>
        </authorList>
    </citation>
    <scope>NUCLEOTIDE SEQUENCE [LARGE SCALE GENOMIC DNA]</scope>
    <source>
        <strain>K12 / MG1655 / ATCC 47076</strain>
    </source>
</reference>
<reference key="3">
    <citation type="journal article" date="1997" name="Science">
        <title>The complete genome sequence of Escherichia coli K-12.</title>
        <authorList>
            <person name="Blattner F.R."/>
            <person name="Plunkett G. III"/>
            <person name="Bloch C.A."/>
            <person name="Perna N.T."/>
            <person name="Burland V."/>
            <person name="Riley M."/>
            <person name="Collado-Vides J."/>
            <person name="Glasner J.D."/>
            <person name="Rode C.K."/>
            <person name="Mayhew G.F."/>
            <person name="Gregor J."/>
            <person name="Davis N.W."/>
            <person name="Kirkpatrick H.A."/>
            <person name="Goeden M.A."/>
            <person name="Rose D.J."/>
            <person name="Mau B."/>
            <person name="Shao Y."/>
        </authorList>
    </citation>
    <scope>NUCLEOTIDE SEQUENCE [LARGE SCALE GENOMIC DNA]</scope>
    <source>
        <strain>K12 / MG1655 / ATCC 47076</strain>
    </source>
</reference>
<reference key="4">
    <citation type="journal article" date="2006" name="Mol. Syst. Biol.">
        <title>Highly accurate genome sequences of Escherichia coli K-12 strains MG1655 and W3110.</title>
        <authorList>
            <person name="Hayashi K."/>
            <person name="Morooka N."/>
            <person name="Yamamoto Y."/>
            <person name="Fujita K."/>
            <person name="Isono K."/>
            <person name="Choi S."/>
            <person name="Ohtsubo E."/>
            <person name="Baba T."/>
            <person name="Wanner B.L."/>
            <person name="Mori H."/>
            <person name="Horiuchi T."/>
        </authorList>
    </citation>
    <scope>NUCLEOTIDE SEQUENCE [LARGE SCALE GENOMIC DNA]</scope>
    <source>
        <strain>K12 / W3110 / ATCC 27325 / DSM 5911</strain>
    </source>
</reference>
<reference key="5">
    <citation type="journal article" date="1991" name="J. Biol. Chem.">
        <title>Selenocysteine synthase from Escherichia coli. Analysis of the reaction sequence.</title>
        <authorList>
            <person name="Forchhammer K."/>
            <person name="Boeck A."/>
        </authorList>
    </citation>
    <scope>FUNCTION</scope>
    <scope>CATALYTIC ACTIVITY</scope>
    <scope>REACTION MECHANISM</scope>
</reference>
<reference key="6">
    <citation type="journal article" date="1992" name="Mol. Microbiol.">
        <title>Structure of selenocysteine synthase from Escherichia coli and location of tRNA in the seryl-tRNA(sec)-enzyme complex.</title>
        <authorList>
            <person name="Engelhardt H."/>
            <person name="Forchhammer K."/>
            <person name="Mueller S."/>
            <person name="Goldie K.N."/>
            <person name="Boeck A."/>
        </authorList>
    </citation>
    <scope>SUBUNIT</scope>
</reference>
<reference key="7">
    <citation type="journal article" date="1997" name="Electrophoresis">
        <title>Escherichia coli proteome analysis using the gene-protein database.</title>
        <authorList>
            <person name="VanBogelen R.A."/>
            <person name="Abshire K.Z."/>
            <person name="Moldover B."/>
            <person name="Olson E.R."/>
            <person name="Neidhardt F.C."/>
        </authorList>
    </citation>
    <scope>IDENTIFICATION BY 2D-GEL</scope>
</reference>
<reference key="8">
    <citation type="journal article" date="1998" name="Eur. J. Biochem.">
        <title>Bacterial selenocysteine synthase -- structural and functional properties.</title>
        <authorList>
            <person name="Tormay P."/>
            <person name="Wilting R."/>
            <person name="Lottspeich F."/>
            <person name="Mehta P.K."/>
            <person name="Christen P."/>
            <person name="Boeck A."/>
        </authorList>
    </citation>
    <scope>PLP BINDING SITE</scope>
    <scope>SUBSTRATE SPECIFICITY</scope>
    <scope>MUTAGENESIS OF LYS-224; LYS-295 AND LYS-328</scope>
</reference>
<protein>
    <recommendedName>
        <fullName>L-seryl-tRNA(Sec) selenium transferase</fullName>
        <ecNumber>2.9.1.1</ecNumber>
    </recommendedName>
    <alternativeName>
        <fullName>Selenocysteine synthase</fullName>
        <shortName>Sec synthase</shortName>
    </alternativeName>
    <alternativeName>
        <fullName>Selenocysteinyl-tRNA(Sec) synthase</fullName>
    </alternativeName>
</protein>